<proteinExistence type="inferred from homology"/>
<feature type="chain" id="PRO_0000298380" description="Disulfide bond formation protein B">
    <location>
        <begin position="1"/>
        <end position="168"/>
    </location>
</feature>
<feature type="topological domain" description="Cytoplasmic" evidence="1">
    <location>
        <begin position="1"/>
        <end position="13"/>
    </location>
</feature>
<feature type="transmembrane region" description="Helical" evidence="1">
    <location>
        <begin position="14"/>
        <end position="30"/>
    </location>
</feature>
<feature type="topological domain" description="Periplasmic" evidence="1">
    <location>
        <begin position="31"/>
        <end position="48"/>
    </location>
</feature>
<feature type="transmembrane region" description="Helical" evidence="1">
    <location>
        <begin position="49"/>
        <end position="64"/>
    </location>
</feature>
<feature type="topological domain" description="Cytoplasmic" evidence="1">
    <location>
        <begin position="65"/>
        <end position="70"/>
    </location>
</feature>
<feature type="transmembrane region" description="Helical" evidence="1">
    <location>
        <begin position="71"/>
        <end position="88"/>
    </location>
</feature>
<feature type="topological domain" description="Periplasmic" evidence="1">
    <location>
        <begin position="89"/>
        <end position="144"/>
    </location>
</feature>
<feature type="transmembrane region" description="Helical" evidence="1">
    <location>
        <begin position="145"/>
        <end position="163"/>
    </location>
</feature>
<feature type="topological domain" description="Cytoplasmic" evidence="1">
    <location>
        <begin position="164"/>
        <end position="168"/>
    </location>
</feature>
<feature type="disulfide bond" description="Redox-active" evidence="1">
    <location>
        <begin position="40"/>
        <end position="43"/>
    </location>
</feature>
<feature type="disulfide bond" description="Redox-active" evidence="1">
    <location>
        <begin position="103"/>
        <end position="130"/>
    </location>
</feature>
<sequence length="168" mass="18327">MFLTYFDAMPRRVLALVSLACVALLAFGLYLQHVVGLEPCPMCIVQRYALVLVAVVAGITAVAKSRGLLITGSGLLVLLSGFGAFVAARQSFLQWYPPEVASCGRDFYGMIETFPLKRAIPMIFKGSGDCTKIDWTFLGLSIANWSFLCFVAIALVGLVLITRLARQR</sequence>
<comment type="function">
    <text evidence="1">Required for disulfide bond formation in some periplasmic proteins. Acts by oxidizing the DsbA protein.</text>
</comment>
<comment type="subcellular location">
    <subcellularLocation>
        <location evidence="1">Cell inner membrane</location>
        <topology evidence="1">Multi-pass membrane protein</topology>
    </subcellularLocation>
</comment>
<comment type="similarity">
    <text evidence="1">Belongs to the DsbB family.</text>
</comment>
<keyword id="KW-0997">Cell inner membrane</keyword>
<keyword id="KW-1003">Cell membrane</keyword>
<keyword id="KW-0143">Chaperone</keyword>
<keyword id="KW-1015">Disulfide bond</keyword>
<keyword id="KW-0249">Electron transport</keyword>
<keyword id="KW-0472">Membrane</keyword>
<keyword id="KW-0560">Oxidoreductase</keyword>
<keyword id="KW-0676">Redox-active center</keyword>
<keyword id="KW-1185">Reference proteome</keyword>
<keyword id="KW-0812">Transmembrane</keyword>
<keyword id="KW-1133">Transmembrane helix</keyword>
<keyword id="KW-0813">Transport</keyword>
<dbReference type="EMBL" id="CP000316">
    <property type="protein sequence ID" value="ABE44306.1"/>
    <property type="molecule type" value="Genomic_DNA"/>
</dbReference>
<dbReference type="RefSeq" id="WP_011483304.1">
    <property type="nucleotide sequence ID" value="NC_007948.1"/>
</dbReference>
<dbReference type="SMR" id="Q12AY6"/>
<dbReference type="STRING" id="296591.Bpro_2385"/>
<dbReference type="KEGG" id="pol:Bpro_2385"/>
<dbReference type="eggNOG" id="COG1495">
    <property type="taxonomic scope" value="Bacteria"/>
</dbReference>
<dbReference type="HOGENOM" id="CLU_098660_1_0_4"/>
<dbReference type="OrthoDB" id="3711263at2"/>
<dbReference type="Proteomes" id="UP000001983">
    <property type="component" value="Chromosome"/>
</dbReference>
<dbReference type="GO" id="GO:0005886">
    <property type="term" value="C:plasma membrane"/>
    <property type="evidence" value="ECO:0007669"/>
    <property type="project" value="UniProtKB-SubCell"/>
</dbReference>
<dbReference type="GO" id="GO:0009055">
    <property type="term" value="F:electron transfer activity"/>
    <property type="evidence" value="ECO:0007669"/>
    <property type="project" value="UniProtKB-UniRule"/>
</dbReference>
<dbReference type="GO" id="GO:0015035">
    <property type="term" value="F:protein-disulfide reductase activity"/>
    <property type="evidence" value="ECO:0007669"/>
    <property type="project" value="UniProtKB-UniRule"/>
</dbReference>
<dbReference type="GO" id="GO:0006457">
    <property type="term" value="P:protein folding"/>
    <property type="evidence" value="ECO:0007669"/>
    <property type="project" value="InterPro"/>
</dbReference>
<dbReference type="Gene3D" id="1.20.1550.10">
    <property type="entry name" value="DsbB-like"/>
    <property type="match status" value="1"/>
</dbReference>
<dbReference type="HAMAP" id="MF_00286">
    <property type="entry name" value="DsbB"/>
    <property type="match status" value="1"/>
</dbReference>
<dbReference type="InterPro" id="IPR003752">
    <property type="entry name" value="DiS_bond_form_DsbB/BdbC"/>
</dbReference>
<dbReference type="InterPro" id="IPR022920">
    <property type="entry name" value="Disulphide_bond_form_DsbB"/>
</dbReference>
<dbReference type="InterPro" id="IPR050183">
    <property type="entry name" value="DsbB"/>
</dbReference>
<dbReference type="InterPro" id="IPR023380">
    <property type="entry name" value="DsbB-like_sf"/>
</dbReference>
<dbReference type="PANTHER" id="PTHR36570">
    <property type="entry name" value="DISULFIDE BOND FORMATION PROTEIN B"/>
    <property type="match status" value="1"/>
</dbReference>
<dbReference type="PANTHER" id="PTHR36570:SF3">
    <property type="entry name" value="DISULFIDE BOND FORMATION PROTEIN B"/>
    <property type="match status" value="1"/>
</dbReference>
<dbReference type="Pfam" id="PF02600">
    <property type="entry name" value="DsbB"/>
    <property type="match status" value="1"/>
</dbReference>
<dbReference type="SUPFAM" id="SSF158442">
    <property type="entry name" value="DsbB-like"/>
    <property type="match status" value="1"/>
</dbReference>
<name>DSBB_POLSJ</name>
<protein>
    <recommendedName>
        <fullName evidence="1">Disulfide bond formation protein B</fullName>
    </recommendedName>
    <alternativeName>
        <fullName evidence="1">Disulfide oxidoreductase</fullName>
    </alternativeName>
</protein>
<gene>
    <name evidence="1" type="primary">dsbB</name>
    <name type="ordered locus">Bpro_2385</name>
</gene>
<organism>
    <name type="scientific">Polaromonas sp. (strain JS666 / ATCC BAA-500)</name>
    <dbReference type="NCBI Taxonomy" id="296591"/>
    <lineage>
        <taxon>Bacteria</taxon>
        <taxon>Pseudomonadati</taxon>
        <taxon>Pseudomonadota</taxon>
        <taxon>Betaproteobacteria</taxon>
        <taxon>Burkholderiales</taxon>
        <taxon>Comamonadaceae</taxon>
        <taxon>Polaromonas</taxon>
    </lineage>
</organism>
<accession>Q12AY6</accession>
<reference key="1">
    <citation type="journal article" date="2008" name="Appl. Environ. Microbiol.">
        <title>The genome of Polaromonas sp. strain JS666: insights into the evolution of a hydrocarbon- and xenobiotic-degrading bacterium, and features of relevance to biotechnology.</title>
        <authorList>
            <person name="Mattes T.E."/>
            <person name="Alexander A.K."/>
            <person name="Richardson P.M."/>
            <person name="Munk A.C."/>
            <person name="Han C.S."/>
            <person name="Stothard P."/>
            <person name="Coleman N.V."/>
        </authorList>
    </citation>
    <scope>NUCLEOTIDE SEQUENCE [LARGE SCALE GENOMIC DNA]</scope>
    <source>
        <strain>JS666 / ATCC BAA-500</strain>
    </source>
</reference>
<evidence type="ECO:0000255" key="1">
    <source>
        <dbReference type="HAMAP-Rule" id="MF_00286"/>
    </source>
</evidence>